<feature type="chain" id="PRO_0000187752" description="Peptidyl-tRNA hydrolase">
    <location>
        <begin position="1"/>
        <end position="185"/>
    </location>
</feature>
<feature type="active site" description="Proton acceptor" evidence="1">
    <location>
        <position position="19"/>
    </location>
</feature>
<feature type="binding site" evidence="1">
    <location>
        <position position="14"/>
    </location>
    <ligand>
        <name>tRNA</name>
        <dbReference type="ChEBI" id="CHEBI:17843"/>
    </ligand>
</feature>
<feature type="binding site" evidence="1">
    <location>
        <position position="64"/>
    </location>
    <ligand>
        <name>tRNA</name>
        <dbReference type="ChEBI" id="CHEBI:17843"/>
    </ligand>
</feature>
<feature type="binding site" evidence="1">
    <location>
        <position position="66"/>
    </location>
    <ligand>
        <name>tRNA</name>
        <dbReference type="ChEBI" id="CHEBI:17843"/>
    </ligand>
</feature>
<feature type="binding site" evidence="1">
    <location>
        <position position="112"/>
    </location>
    <ligand>
        <name>tRNA</name>
        <dbReference type="ChEBI" id="CHEBI:17843"/>
    </ligand>
</feature>
<feature type="site" description="Discriminates between blocked and unblocked aminoacyl-tRNA" evidence="1">
    <location>
        <position position="9"/>
    </location>
</feature>
<feature type="site" description="Stabilizes the basic form of H active site to accept a proton" evidence="1">
    <location>
        <position position="91"/>
    </location>
</feature>
<dbReference type="EC" id="3.1.1.29" evidence="1"/>
<dbReference type="EMBL" id="CP000033">
    <property type="protein sequence ID" value="AAV42165.1"/>
    <property type="molecule type" value="Genomic_DNA"/>
</dbReference>
<dbReference type="RefSeq" id="WP_003549001.1">
    <property type="nucleotide sequence ID" value="NC_006814.3"/>
</dbReference>
<dbReference type="RefSeq" id="YP_193196.1">
    <property type="nucleotide sequence ID" value="NC_006814.3"/>
</dbReference>
<dbReference type="SMR" id="Q5FMA9"/>
<dbReference type="STRING" id="272621.LBA0272"/>
<dbReference type="GeneID" id="93290623"/>
<dbReference type="KEGG" id="lac:LBA0272"/>
<dbReference type="PATRIC" id="fig|272621.13.peg.257"/>
<dbReference type="eggNOG" id="COG0193">
    <property type="taxonomic scope" value="Bacteria"/>
</dbReference>
<dbReference type="HOGENOM" id="CLU_062456_4_1_9"/>
<dbReference type="OrthoDB" id="9800507at2"/>
<dbReference type="BioCyc" id="LACI272621:G1G49-263-MONOMER"/>
<dbReference type="Proteomes" id="UP000006381">
    <property type="component" value="Chromosome"/>
</dbReference>
<dbReference type="GO" id="GO:0005737">
    <property type="term" value="C:cytoplasm"/>
    <property type="evidence" value="ECO:0007669"/>
    <property type="project" value="UniProtKB-SubCell"/>
</dbReference>
<dbReference type="GO" id="GO:0004045">
    <property type="term" value="F:peptidyl-tRNA hydrolase activity"/>
    <property type="evidence" value="ECO:0007669"/>
    <property type="project" value="UniProtKB-UniRule"/>
</dbReference>
<dbReference type="GO" id="GO:0000049">
    <property type="term" value="F:tRNA binding"/>
    <property type="evidence" value="ECO:0007669"/>
    <property type="project" value="UniProtKB-UniRule"/>
</dbReference>
<dbReference type="GO" id="GO:0006515">
    <property type="term" value="P:protein quality control for misfolded or incompletely synthesized proteins"/>
    <property type="evidence" value="ECO:0007669"/>
    <property type="project" value="UniProtKB-UniRule"/>
</dbReference>
<dbReference type="GO" id="GO:0072344">
    <property type="term" value="P:rescue of stalled ribosome"/>
    <property type="evidence" value="ECO:0007669"/>
    <property type="project" value="UniProtKB-UniRule"/>
</dbReference>
<dbReference type="CDD" id="cd00462">
    <property type="entry name" value="PTH"/>
    <property type="match status" value="1"/>
</dbReference>
<dbReference type="FunFam" id="3.40.50.1470:FF:000001">
    <property type="entry name" value="Peptidyl-tRNA hydrolase"/>
    <property type="match status" value="1"/>
</dbReference>
<dbReference type="Gene3D" id="3.40.50.1470">
    <property type="entry name" value="Peptidyl-tRNA hydrolase"/>
    <property type="match status" value="1"/>
</dbReference>
<dbReference type="HAMAP" id="MF_00083">
    <property type="entry name" value="Pept_tRNA_hydro_bact"/>
    <property type="match status" value="1"/>
</dbReference>
<dbReference type="InterPro" id="IPR001328">
    <property type="entry name" value="Pept_tRNA_hydro"/>
</dbReference>
<dbReference type="InterPro" id="IPR018171">
    <property type="entry name" value="Pept_tRNA_hydro_CS"/>
</dbReference>
<dbReference type="InterPro" id="IPR036416">
    <property type="entry name" value="Pept_tRNA_hydro_sf"/>
</dbReference>
<dbReference type="NCBIfam" id="TIGR00447">
    <property type="entry name" value="pth"/>
    <property type="match status" value="1"/>
</dbReference>
<dbReference type="PANTHER" id="PTHR17224">
    <property type="entry name" value="PEPTIDYL-TRNA HYDROLASE"/>
    <property type="match status" value="1"/>
</dbReference>
<dbReference type="PANTHER" id="PTHR17224:SF1">
    <property type="entry name" value="PEPTIDYL-TRNA HYDROLASE"/>
    <property type="match status" value="1"/>
</dbReference>
<dbReference type="Pfam" id="PF01195">
    <property type="entry name" value="Pept_tRNA_hydro"/>
    <property type="match status" value="1"/>
</dbReference>
<dbReference type="SUPFAM" id="SSF53178">
    <property type="entry name" value="Peptidyl-tRNA hydrolase-like"/>
    <property type="match status" value="1"/>
</dbReference>
<dbReference type="PROSITE" id="PS01195">
    <property type="entry name" value="PEPT_TRNA_HYDROL_1"/>
    <property type="match status" value="1"/>
</dbReference>
<evidence type="ECO:0000255" key="1">
    <source>
        <dbReference type="HAMAP-Rule" id="MF_00083"/>
    </source>
</evidence>
<name>PTH_LACAC</name>
<keyword id="KW-0963">Cytoplasm</keyword>
<keyword id="KW-0378">Hydrolase</keyword>
<keyword id="KW-1185">Reference proteome</keyword>
<keyword id="KW-0694">RNA-binding</keyword>
<keyword id="KW-0820">tRNA-binding</keyword>
<gene>
    <name evidence="1" type="primary">pth</name>
    <name type="ordered locus">LBA0272</name>
</gene>
<accession>Q5FMA9</accession>
<organism>
    <name type="scientific">Lactobacillus acidophilus (strain ATCC 700396 / NCK56 / N2 / NCFM)</name>
    <dbReference type="NCBI Taxonomy" id="272621"/>
    <lineage>
        <taxon>Bacteria</taxon>
        <taxon>Bacillati</taxon>
        <taxon>Bacillota</taxon>
        <taxon>Bacilli</taxon>
        <taxon>Lactobacillales</taxon>
        <taxon>Lactobacillaceae</taxon>
        <taxon>Lactobacillus</taxon>
    </lineage>
</organism>
<proteinExistence type="inferred from homology"/>
<comment type="function">
    <text evidence="1">Hydrolyzes ribosome-free peptidyl-tRNAs (with 1 or more amino acids incorporated), which drop off the ribosome during protein synthesis, or as a result of ribosome stalling.</text>
</comment>
<comment type="function">
    <text evidence="1">Catalyzes the release of premature peptidyl moieties from peptidyl-tRNA molecules trapped in stalled 50S ribosomal subunits, and thus maintains levels of free tRNAs and 50S ribosomes.</text>
</comment>
<comment type="catalytic activity">
    <reaction evidence="1">
        <text>an N-acyl-L-alpha-aminoacyl-tRNA + H2O = an N-acyl-L-amino acid + a tRNA + H(+)</text>
        <dbReference type="Rhea" id="RHEA:54448"/>
        <dbReference type="Rhea" id="RHEA-COMP:10123"/>
        <dbReference type="Rhea" id="RHEA-COMP:13883"/>
        <dbReference type="ChEBI" id="CHEBI:15377"/>
        <dbReference type="ChEBI" id="CHEBI:15378"/>
        <dbReference type="ChEBI" id="CHEBI:59874"/>
        <dbReference type="ChEBI" id="CHEBI:78442"/>
        <dbReference type="ChEBI" id="CHEBI:138191"/>
        <dbReference type="EC" id="3.1.1.29"/>
    </reaction>
</comment>
<comment type="subunit">
    <text evidence="1">Monomer.</text>
</comment>
<comment type="subcellular location">
    <subcellularLocation>
        <location evidence="1">Cytoplasm</location>
    </subcellularLocation>
</comment>
<comment type="similarity">
    <text evidence="1">Belongs to the PTH family.</text>
</comment>
<sequence length="185" mass="21055">MKIIAGLGNPGQKYDKTKHNTGFMTMDHYLDKKGLTLNKDKFEGHWTKEKINGEDVIFLEPQTYMNESGRSVSQIANFFKVAPEDVLIIQDDMDMPIGKIRIRANGKSGGHNGIKSIIRDLGTEKFNRLKIGIRHPKNATVVSWVLTPFNDEQQKLMDDAFDTSVDIIDDFIAGRDSQYLMNKYN</sequence>
<reference key="1">
    <citation type="journal article" date="2005" name="Proc. Natl. Acad. Sci. U.S.A.">
        <title>Complete genome sequence of the probiotic lactic acid bacterium Lactobacillus acidophilus NCFM.</title>
        <authorList>
            <person name="Altermann E."/>
            <person name="Russell W.M."/>
            <person name="Azcarate-Peril M.A."/>
            <person name="Barrangou R."/>
            <person name="Buck B.L."/>
            <person name="McAuliffe O."/>
            <person name="Souther N."/>
            <person name="Dobson A."/>
            <person name="Duong T."/>
            <person name="Callanan M."/>
            <person name="Lick S."/>
            <person name="Hamrick A."/>
            <person name="Cano R."/>
            <person name="Klaenhammer T.R."/>
        </authorList>
    </citation>
    <scope>NUCLEOTIDE SEQUENCE [LARGE SCALE GENOMIC DNA]</scope>
    <source>
        <strain>ATCC 700396 / NCK56 / N2 / NCFM</strain>
    </source>
</reference>
<protein>
    <recommendedName>
        <fullName evidence="1">Peptidyl-tRNA hydrolase</fullName>
        <shortName evidence="1">Pth</shortName>
        <ecNumber evidence="1">3.1.1.29</ecNumber>
    </recommendedName>
</protein>